<gene>
    <name evidence="1" type="primary">rlmH</name>
    <name type="ordered locus">MmarC7_0291</name>
</gene>
<sequence length="159" mass="18190">MNITIISVGKIKEKYLSDAINEYSKRISRYSKIDIIEVADEKTPENPSEVEKSKILEKEAERILKYLKKDSFLITLEILGKELTSESLAKKINDLSISGKSDITFIIGGSLGLSKNISEISDFKLSFSKMTFPHQLMRVILLEQVYRSFRIINGEPYHK</sequence>
<dbReference type="EC" id="2.1.1.177" evidence="1"/>
<dbReference type="EMBL" id="CP000745">
    <property type="protein sequence ID" value="ABR65361.1"/>
    <property type="molecule type" value="Genomic_DNA"/>
</dbReference>
<dbReference type="SMR" id="A6VFY5"/>
<dbReference type="STRING" id="426368.MmarC7_0291"/>
<dbReference type="KEGG" id="mmz:MmarC7_0291"/>
<dbReference type="eggNOG" id="arCOG05111">
    <property type="taxonomic scope" value="Archaea"/>
</dbReference>
<dbReference type="HOGENOM" id="CLU_100552_0_0_2"/>
<dbReference type="OrthoDB" id="111266at2157"/>
<dbReference type="GO" id="GO:0005737">
    <property type="term" value="C:cytoplasm"/>
    <property type="evidence" value="ECO:0007669"/>
    <property type="project" value="UniProtKB-SubCell"/>
</dbReference>
<dbReference type="GO" id="GO:0070038">
    <property type="term" value="F:rRNA (pseudouridine-N3-)-methyltransferase activity"/>
    <property type="evidence" value="ECO:0007669"/>
    <property type="project" value="UniProtKB-UniRule"/>
</dbReference>
<dbReference type="CDD" id="cd18081">
    <property type="entry name" value="RlmH-like"/>
    <property type="match status" value="1"/>
</dbReference>
<dbReference type="Gene3D" id="3.40.1280.10">
    <property type="match status" value="1"/>
</dbReference>
<dbReference type="HAMAP" id="MF_00658">
    <property type="entry name" value="23SrRNA_methyltr_H"/>
    <property type="match status" value="1"/>
</dbReference>
<dbReference type="InterPro" id="IPR029028">
    <property type="entry name" value="Alpha/beta_knot_MTases"/>
</dbReference>
<dbReference type="InterPro" id="IPR003742">
    <property type="entry name" value="RlmH-like"/>
</dbReference>
<dbReference type="InterPro" id="IPR029026">
    <property type="entry name" value="tRNA_m1G_MTases_N"/>
</dbReference>
<dbReference type="NCBIfam" id="NF000985">
    <property type="entry name" value="PRK00103.1-3"/>
    <property type="match status" value="1"/>
</dbReference>
<dbReference type="NCBIfam" id="TIGR00246">
    <property type="entry name" value="tRNA_RlmH_YbeA"/>
    <property type="match status" value="1"/>
</dbReference>
<dbReference type="PANTHER" id="PTHR33603">
    <property type="entry name" value="METHYLTRANSFERASE"/>
    <property type="match status" value="1"/>
</dbReference>
<dbReference type="PANTHER" id="PTHR33603:SF1">
    <property type="entry name" value="RIBOSOMAL RNA LARGE SUBUNIT METHYLTRANSFERASE H"/>
    <property type="match status" value="1"/>
</dbReference>
<dbReference type="Pfam" id="PF02590">
    <property type="entry name" value="SPOUT_MTase"/>
    <property type="match status" value="1"/>
</dbReference>
<dbReference type="PIRSF" id="PIRSF004505">
    <property type="entry name" value="MT_bac"/>
    <property type="match status" value="1"/>
</dbReference>
<dbReference type="SUPFAM" id="SSF75217">
    <property type="entry name" value="alpha/beta knot"/>
    <property type="match status" value="1"/>
</dbReference>
<feature type="chain" id="PRO_1000061807" description="Putative ribosomal RNA large subunit methyltransferase H">
    <location>
        <begin position="1"/>
        <end position="159"/>
    </location>
</feature>
<feature type="binding site" evidence="1">
    <location>
        <position position="76"/>
    </location>
    <ligand>
        <name>S-adenosyl-L-methionine</name>
        <dbReference type="ChEBI" id="CHEBI:59789"/>
    </ligand>
</feature>
<feature type="binding site" evidence="1">
    <location>
        <position position="108"/>
    </location>
    <ligand>
        <name>S-adenosyl-L-methionine</name>
        <dbReference type="ChEBI" id="CHEBI:59789"/>
    </ligand>
</feature>
<feature type="binding site" evidence="1">
    <location>
        <begin position="127"/>
        <end position="132"/>
    </location>
    <ligand>
        <name>S-adenosyl-L-methionine</name>
        <dbReference type="ChEBI" id="CHEBI:59789"/>
    </ligand>
</feature>
<proteinExistence type="inferred from homology"/>
<accession>A6VFY5</accession>
<comment type="function">
    <text evidence="1">Specifically methylates the pseudouridine at position 1915 (m3Psi1915) in 23S rRNA.</text>
</comment>
<comment type="catalytic activity">
    <reaction evidence="1">
        <text>pseudouridine(1915) in 23S rRNA + S-adenosyl-L-methionine = N(3)-methylpseudouridine(1915) in 23S rRNA + S-adenosyl-L-homocysteine + H(+)</text>
        <dbReference type="Rhea" id="RHEA:42752"/>
        <dbReference type="Rhea" id="RHEA-COMP:10221"/>
        <dbReference type="Rhea" id="RHEA-COMP:10222"/>
        <dbReference type="ChEBI" id="CHEBI:15378"/>
        <dbReference type="ChEBI" id="CHEBI:57856"/>
        <dbReference type="ChEBI" id="CHEBI:59789"/>
        <dbReference type="ChEBI" id="CHEBI:65314"/>
        <dbReference type="ChEBI" id="CHEBI:74486"/>
        <dbReference type="EC" id="2.1.1.177"/>
    </reaction>
</comment>
<comment type="subcellular location">
    <subcellularLocation>
        <location evidence="1">Cytoplasm</location>
    </subcellularLocation>
</comment>
<comment type="similarity">
    <text evidence="1">Belongs to the RNA methyltransferase RlmH family.</text>
</comment>
<reference key="1">
    <citation type="submission" date="2007-06" db="EMBL/GenBank/DDBJ databases">
        <title>Complete sequence of Methanococcus maripaludis C7.</title>
        <authorList>
            <consortium name="US DOE Joint Genome Institute"/>
            <person name="Copeland A."/>
            <person name="Lucas S."/>
            <person name="Lapidus A."/>
            <person name="Barry K."/>
            <person name="Glavina del Rio T."/>
            <person name="Dalin E."/>
            <person name="Tice H."/>
            <person name="Pitluck S."/>
            <person name="Clum A."/>
            <person name="Schmutz J."/>
            <person name="Larimer F."/>
            <person name="Land M."/>
            <person name="Hauser L."/>
            <person name="Kyrpides N."/>
            <person name="Anderson I."/>
            <person name="Sieprawska-Lupa M."/>
            <person name="Whitman W.B."/>
            <person name="Richardson P."/>
        </authorList>
    </citation>
    <scope>NUCLEOTIDE SEQUENCE [LARGE SCALE GENOMIC DNA]</scope>
    <source>
        <strain>C7 / ATCC BAA-1331</strain>
    </source>
</reference>
<organism>
    <name type="scientific">Methanococcus maripaludis (strain C7 / ATCC BAA-1331)</name>
    <dbReference type="NCBI Taxonomy" id="426368"/>
    <lineage>
        <taxon>Archaea</taxon>
        <taxon>Methanobacteriati</taxon>
        <taxon>Methanobacteriota</taxon>
        <taxon>Methanomada group</taxon>
        <taxon>Methanococci</taxon>
        <taxon>Methanococcales</taxon>
        <taxon>Methanococcaceae</taxon>
        <taxon>Methanococcus</taxon>
    </lineage>
</organism>
<protein>
    <recommendedName>
        <fullName evidence="1">Putative ribosomal RNA large subunit methyltransferase H</fullName>
        <ecNumber evidence="1">2.1.1.177</ecNumber>
    </recommendedName>
    <alternativeName>
        <fullName evidence="1">23S rRNA (pseudouridine1915-N3)-methyltransferase</fullName>
    </alternativeName>
    <alternativeName>
        <fullName evidence="1">rRNA (pseudouridine-N3-)-methyltransferase RlmH</fullName>
    </alternativeName>
</protein>
<evidence type="ECO:0000255" key="1">
    <source>
        <dbReference type="HAMAP-Rule" id="MF_00658"/>
    </source>
</evidence>
<keyword id="KW-0963">Cytoplasm</keyword>
<keyword id="KW-0489">Methyltransferase</keyword>
<keyword id="KW-0698">rRNA processing</keyword>
<keyword id="KW-0949">S-adenosyl-L-methionine</keyword>
<keyword id="KW-0808">Transferase</keyword>
<name>RLMH_METM7</name>